<proteinExistence type="inferred from homology"/>
<name>RL36_METC4</name>
<reference key="1">
    <citation type="submission" date="2008-12" db="EMBL/GenBank/DDBJ databases">
        <title>Complete sequence of chromosome of Methylobacterium chloromethanicum CM4.</title>
        <authorList>
            <consortium name="US DOE Joint Genome Institute"/>
            <person name="Lucas S."/>
            <person name="Copeland A."/>
            <person name="Lapidus A."/>
            <person name="Glavina del Rio T."/>
            <person name="Dalin E."/>
            <person name="Tice H."/>
            <person name="Bruce D."/>
            <person name="Goodwin L."/>
            <person name="Pitluck S."/>
            <person name="Chertkov O."/>
            <person name="Brettin T."/>
            <person name="Detter J.C."/>
            <person name="Han C."/>
            <person name="Larimer F."/>
            <person name="Land M."/>
            <person name="Hauser L."/>
            <person name="Kyrpides N."/>
            <person name="Mikhailova N."/>
            <person name="Marx C."/>
            <person name="Richardson P."/>
        </authorList>
    </citation>
    <scope>NUCLEOTIDE SEQUENCE [LARGE SCALE GENOMIC DNA]</scope>
    <source>
        <strain>CM4 / NCIMB 13688</strain>
    </source>
</reference>
<protein>
    <recommendedName>
        <fullName evidence="1">Large ribosomal subunit protein bL36</fullName>
    </recommendedName>
    <alternativeName>
        <fullName evidence="2">50S ribosomal protein L36</fullName>
    </alternativeName>
</protein>
<keyword id="KW-0687">Ribonucleoprotein</keyword>
<keyword id="KW-0689">Ribosomal protein</keyword>
<organism>
    <name type="scientific">Methylorubrum extorquens (strain CM4 / NCIMB 13688)</name>
    <name type="common">Methylobacterium extorquens</name>
    <dbReference type="NCBI Taxonomy" id="440085"/>
    <lineage>
        <taxon>Bacteria</taxon>
        <taxon>Pseudomonadati</taxon>
        <taxon>Pseudomonadota</taxon>
        <taxon>Alphaproteobacteria</taxon>
        <taxon>Hyphomicrobiales</taxon>
        <taxon>Methylobacteriaceae</taxon>
        <taxon>Methylorubrum</taxon>
    </lineage>
</organism>
<evidence type="ECO:0000255" key="1">
    <source>
        <dbReference type="HAMAP-Rule" id="MF_00251"/>
    </source>
</evidence>
<evidence type="ECO:0000305" key="2"/>
<sequence length="41" mass="4994">MKIRNSLKSLRGRHRDNQLVRRKGRVYVINKTQKRFKARQG</sequence>
<dbReference type="EMBL" id="CP001298">
    <property type="protein sequence ID" value="ACK83806.1"/>
    <property type="molecule type" value="Genomic_DNA"/>
</dbReference>
<dbReference type="SMR" id="B7KQP2"/>
<dbReference type="KEGG" id="mch:Mchl_2968"/>
<dbReference type="HOGENOM" id="CLU_135723_3_2_5"/>
<dbReference type="Proteomes" id="UP000002385">
    <property type="component" value="Chromosome"/>
</dbReference>
<dbReference type="GO" id="GO:1990904">
    <property type="term" value="C:ribonucleoprotein complex"/>
    <property type="evidence" value="ECO:0007669"/>
    <property type="project" value="UniProtKB-KW"/>
</dbReference>
<dbReference type="GO" id="GO:0005840">
    <property type="term" value="C:ribosome"/>
    <property type="evidence" value="ECO:0007669"/>
    <property type="project" value="UniProtKB-KW"/>
</dbReference>
<dbReference type="GO" id="GO:0003735">
    <property type="term" value="F:structural constituent of ribosome"/>
    <property type="evidence" value="ECO:0007669"/>
    <property type="project" value="InterPro"/>
</dbReference>
<dbReference type="GO" id="GO:0006412">
    <property type="term" value="P:translation"/>
    <property type="evidence" value="ECO:0007669"/>
    <property type="project" value="UniProtKB-UniRule"/>
</dbReference>
<dbReference type="HAMAP" id="MF_00251">
    <property type="entry name" value="Ribosomal_bL36"/>
    <property type="match status" value="1"/>
</dbReference>
<dbReference type="InterPro" id="IPR000473">
    <property type="entry name" value="Ribosomal_bL36"/>
</dbReference>
<dbReference type="InterPro" id="IPR035977">
    <property type="entry name" value="Ribosomal_bL36_sp"/>
</dbReference>
<dbReference type="InterPro" id="IPR047621">
    <property type="entry name" value="Ribosomal_L36_bact"/>
</dbReference>
<dbReference type="NCBIfam" id="NF002021">
    <property type="entry name" value="PRK00831.1"/>
    <property type="match status" value="1"/>
</dbReference>
<dbReference type="NCBIfam" id="TIGR01022">
    <property type="entry name" value="rpmJ_bact"/>
    <property type="match status" value="1"/>
</dbReference>
<dbReference type="PANTHER" id="PTHR47781">
    <property type="entry name" value="50S RIBOSOMAL PROTEIN L36 2"/>
    <property type="match status" value="1"/>
</dbReference>
<dbReference type="PANTHER" id="PTHR47781:SF1">
    <property type="entry name" value="LARGE RIBOSOMAL SUBUNIT PROTEIN BL36B"/>
    <property type="match status" value="1"/>
</dbReference>
<dbReference type="Pfam" id="PF00444">
    <property type="entry name" value="Ribosomal_L36"/>
    <property type="match status" value="1"/>
</dbReference>
<dbReference type="SUPFAM" id="SSF57840">
    <property type="entry name" value="Ribosomal protein L36"/>
    <property type="match status" value="1"/>
</dbReference>
<dbReference type="PROSITE" id="PS00828">
    <property type="entry name" value="RIBOSOMAL_L36"/>
    <property type="match status" value="1"/>
</dbReference>
<feature type="chain" id="PRO_1000196195" description="Large ribosomal subunit protein bL36">
    <location>
        <begin position="1"/>
        <end position="41"/>
    </location>
</feature>
<comment type="similarity">
    <text evidence="1">Belongs to the bacterial ribosomal protein bL36 family.</text>
</comment>
<gene>
    <name evidence="1" type="primary">rpmJ</name>
    <name type="ordered locus">Mchl_2968</name>
</gene>
<accession>B7KQP2</accession>